<organism>
    <name type="scientific">Escherichia coli (strain K12)</name>
    <dbReference type="NCBI Taxonomy" id="83333"/>
    <lineage>
        <taxon>Bacteria</taxon>
        <taxon>Pseudomonadati</taxon>
        <taxon>Pseudomonadota</taxon>
        <taxon>Gammaproteobacteria</taxon>
        <taxon>Enterobacterales</taxon>
        <taxon>Enterobacteriaceae</taxon>
        <taxon>Escherichia</taxon>
    </lineage>
</organism>
<sequence>MSRFVPRIIPFYLLLLVAGGTANAQSTFEQKAANPFDNNNDGLPDLGMAPENHDGEKHFAEIVKDFGETSMNDNGLDTGEQAKAFALGKVRDALSQQVNQHVESWLSPWGNASVDVKVDNEGHFTGSRGSWFVPLQDNDRYLTWSQLGLTQQDNGLVSNVGVGQRWARGNWLVGYNTFYDNLLDENLQRAGFGAEAWGEYLRLSANFYQPFAAWHEQTATQEQRMARGYDLTARMRMPFYQHLNTSVSLEQYFGDRVDLFNSGTGYHNPVALSLGLNYTPVPLVTVTAQHKQGESGENQNNLGLNLNYRFGVPLKKQLSAGEVAESQSLRGSRYDNPQRNNLPTLEYRQRKTLTVFLATPPWDLKPGETVPLKLQIRSRYGIRQLIWQGDTQILSLTPGAQANSAEGWTLIMPDWQNGEGASNHWRLSVVVEDNQGQRVSSNEITLTLVEPFDALSNDELRWEP</sequence>
<dbReference type="EMBL" id="U00096">
    <property type="protein sequence ID" value="AAC74304.2"/>
    <property type="molecule type" value="Genomic_DNA"/>
</dbReference>
<dbReference type="EMBL" id="AP009048">
    <property type="protein sequence ID" value="BAA36088.1"/>
    <property type="molecule type" value="Genomic_DNA"/>
</dbReference>
<dbReference type="EMBL" id="L28709">
    <property type="status" value="NOT_ANNOTATED_CDS"/>
    <property type="molecule type" value="Genomic_DNA"/>
</dbReference>
<dbReference type="EMBL" id="X13360">
    <property type="status" value="NOT_ANNOTATED_CDS"/>
    <property type="molecule type" value="Genomic_DNA"/>
</dbReference>
<dbReference type="EMBL" id="M24910">
    <property type="status" value="NOT_ANNOTATED_CDS"/>
    <property type="molecule type" value="Genomic_DNA"/>
</dbReference>
<dbReference type="EMBL" id="X69189">
    <property type="status" value="NOT_ANNOTATED_CDS"/>
    <property type="molecule type" value="Genomic_DNA"/>
</dbReference>
<dbReference type="PIR" id="A64869">
    <property type="entry name" value="A64869"/>
</dbReference>
<dbReference type="RefSeq" id="NP_415738.2">
    <property type="nucleotide sequence ID" value="NC_000913.3"/>
</dbReference>
<dbReference type="RefSeq" id="WP_000086217.1">
    <property type="nucleotide sequence ID" value="NZ_SSZK01000010.1"/>
</dbReference>
<dbReference type="SMR" id="P39165"/>
<dbReference type="BioGRID" id="4263269">
    <property type="interactions" value="175"/>
</dbReference>
<dbReference type="FunCoup" id="P39165">
    <property type="interactions" value="33"/>
</dbReference>
<dbReference type="IntAct" id="P39165">
    <property type="interactions" value="7"/>
</dbReference>
<dbReference type="STRING" id="511145.b1220"/>
<dbReference type="TCDB" id="1.B.54.1.9">
    <property type="family name" value="the intimin/invasin (int/inv) or autotransporter-3 (at-3) family"/>
</dbReference>
<dbReference type="PaxDb" id="511145-b1220"/>
<dbReference type="EnsemblBacteria" id="AAC74304">
    <property type="protein sequence ID" value="AAC74304"/>
    <property type="gene ID" value="b1220"/>
</dbReference>
<dbReference type="GeneID" id="945801"/>
<dbReference type="KEGG" id="ecj:JW1211"/>
<dbReference type="KEGG" id="eco:b1220"/>
<dbReference type="KEGG" id="ecoc:C3026_07175"/>
<dbReference type="PATRIC" id="fig|1411691.4.peg.1062"/>
<dbReference type="EchoBASE" id="EB2305"/>
<dbReference type="eggNOG" id="COG4932">
    <property type="taxonomic scope" value="Bacteria"/>
</dbReference>
<dbReference type="HOGENOM" id="CLU_000210_6_0_6"/>
<dbReference type="InParanoid" id="P39165"/>
<dbReference type="OMA" id="YHNPVAV"/>
<dbReference type="OrthoDB" id="8320584at2"/>
<dbReference type="PhylomeDB" id="P39165"/>
<dbReference type="BioCyc" id="EcoCyc:EG12405-MONOMER"/>
<dbReference type="PHI-base" id="PHI:6184"/>
<dbReference type="PRO" id="PR:P39165"/>
<dbReference type="Proteomes" id="UP000000625">
    <property type="component" value="Chromosome"/>
</dbReference>
<dbReference type="GO" id="GO:0009279">
    <property type="term" value="C:cell outer membrane"/>
    <property type="evidence" value="ECO:0007005"/>
    <property type="project" value="EcoCyc"/>
</dbReference>
<dbReference type="GO" id="GO:0042597">
    <property type="term" value="C:periplasmic space"/>
    <property type="evidence" value="ECO:0007669"/>
    <property type="project" value="UniProtKB-SubCell"/>
</dbReference>
<dbReference type="FunFam" id="2.40.160.160:FF:000001">
    <property type="entry name" value="Intimin-like inverse autotransporter SinH"/>
    <property type="match status" value="1"/>
</dbReference>
<dbReference type="Gene3D" id="2.40.160.160">
    <property type="entry name" value="Inverse autotransporter, beta-domain"/>
    <property type="match status" value="1"/>
</dbReference>
<dbReference type="InterPro" id="IPR024519">
    <property type="entry name" value="IAT_beta"/>
</dbReference>
<dbReference type="InterPro" id="IPR038177">
    <property type="entry name" value="IAT_beta_sf"/>
</dbReference>
<dbReference type="InterPro" id="IPR051715">
    <property type="entry name" value="Intimin-Invasin_domain"/>
</dbReference>
<dbReference type="NCBIfam" id="NF007556">
    <property type="entry name" value="PRK10177.1"/>
    <property type="match status" value="1"/>
</dbReference>
<dbReference type="PANTHER" id="PTHR39576">
    <property type="entry name" value="ATTACHING AND EFFACING PROTEIN HOMOLOG-RELATED-RELATED"/>
    <property type="match status" value="1"/>
</dbReference>
<dbReference type="PANTHER" id="PTHR39576:SF1">
    <property type="entry name" value="INVASIN"/>
    <property type="match status" value="1"/>
</dbReference>
<dbReference type="Pfam" id="PF11924">
    <property type="entry name" value="IAT_beta"/>
    <property type="match status" value="1"/>
</dbReference>
<proteinExistence type="inferred from homology"/>
<feature type="signal peptide" evidence="1">
    <location>
        <begin position="1"/>
        <end position="24"/>
    </location>
</feature>
<feature type="chain" id="PRO_0000211832" description="Uncharacterized protein YchO">
    <location>
        <begin position="25"/>
        <end position="464"/>
    </location>
</feature>
<gene>
    <name type="primary">ychO</name>
    <name type="synonym">ychP</name>
    <name type="ordered locus">b1220</name>
    <name type="ordered locus">JW1211</name>
</gene>
<comment type="subcellular location">
    <subcellularLocation>
        <location evidence="2">Periplasm</location>
    </subcellularLocation>
</comment>
<comment type="similarity">
    <text evidence="2">Belongs to the intimin/invasin family.</text>
</comment>
<comment type="sequence caution" evidence="2">
    <conflict type="frameshift">
        <sequence resource="EMBL" id="X69189"/>
    </conflict>
</comment>
<accession>P39165</accession>
<accession>P46124</accession>
<accession>P76022</accession>
<protein>
    <recommendedName>
        <fullName>Uncharacterized protein YchO</fullName>
    </recommendedName>
</protein>
<keyword id="KW-0574">Periplasm</keyword>
<keyword id="KW-1185">Reference proteome</keyword>
<keyword id="KW-0732">Signal</keyword>
<reference key="1">
    <citation type="journal article" date="1996" name="DNA Res.">
        <title>A 718-kb DNA sequence of the Escherichia coli K-12 genome corresponding to the 12.7-28.0 min region on the linkage map.</title>
        <authorList>
            <person name="Oshima T."/>
            <person name="Aiba H."/>
            <person name="Baba T."/>
            <person name="Fujita K."/>
            <person name="Hayashi K."/>
            <person name="Honjo A."/>
            <person name="Ikemoto K."/>
            <person name="Inada T."/>
            <person name="Itoh T."/>
            <person name="Kajihara M."/>
            <person name="Kanai K."/>
            <person name="Kashimoto K."/>
            <person name="Kimura S."/>
            <person name="Kitagawa M."/>
            <person name="Makino K."/>
            <person name="Masuda S."/>
            <person name="Miki T."/>
            <person name="Mizobuchi K."/>
            <person name="Mori H."/>
            <person name="Motomura K."/>
            <person name="Nakamura Y."/>
            <person name="Nashimoto H."/>
            <person name="Nishio Y."/>
            <person name="Saito N."/>
            <person name="Sampei G."/>
            <person name="Seki Y."/>
            <person name="Tagami H."/>
            <person name="Takemoto K."/>
            <person name="Wada C."/>
            <person name="Yamamoto Y."/>
            <person name="Yano M."/>
            <person name="Horiuchi T."/>
        </authorList>
    </citation>
    <scope>NUCLEOTIDE SEQUENCE [LARGE SCALE GENOMIC DNA]</scope>
    <source>
        <strain>K12 / W3110 / ATCC 27325 / DSM 5911</strain>
    </source>
</reference>
<reference key="2">
    <citation type="journal article" date="1997" name="Science">
        <title>The complete genome sequence of Escherichia coli K-12.</title>
        <authorList>
            <person name="Blattner F.R."/>
            <person name="Plunkett G. III"/>
            <person name="Bloch C.A."/>
            <person name="Perna N.T."/>
            <person name="Burland V."/>
            <person name="Riley M."/>
            <person name="Collado-Vides J."/>
            <person name="Glasner J.D."/>
            <person name="Rode C.K."/>
            <person name="Mayhew G.F."/>
            <person name="Gregor J."/>
            <person name="Davis N.W."/>
            <person name="Kirkpatrick H.A."/>
            <person name="Goeden M.A."/>
            <person name="Rose D.J."/>
            <person name="Mau B."/>
            <person name="Shao Y."/>
        </authorList>
    </citation>
    <scope>NUCLEOTIDE SEQUENCE [LARGE SCALE GENOMIC DNA]</scope>
    <source>
        <strain>K12 / MG1655 / ATCC 47076</strain>
    </source>
</reference>
<reference key="3">
    <citation type="journal article" date="2006" name="Mol. Syst. Biol.">
        <title>Highly accurate genome sequences of Escherichia coli K-12 strains MG1655 and W3110.</title>
        <authorList>
            <person name="Hayashi K."/>
            <person name="Morooka N."/>
            <person name="Yamamoto Y."/>
            <person name="Fujita K."/>
            <person name="Isono K."/>
            <person name="Choi S."/>
            <person name="Ohtsubo E."/>
            <person name="Baba T."/>
            <person name="Wanner B.L."/>
            <person name="Mori H."/>
            <person name="Horiuchi T."/>
        </authorList>
    </citation>
    <scope>NUCLEOTIDE SEQUENCE [LARGE SCALE GENOMIC DNA]</scope>
    <source>
        <strain>K12 / W3110 / ATCC 27325 / DSM 5911</strain>
    </source>
</reference>
<reference key="4">
    <citation type="submission" date="1994-07" db="EMBL/GenBank/DDBJ databases">
        <authorList>
            <person name="Ivey D.M."/>
            <person name="Guffanti A.A."/>
            <person name="Zemsky J."/>
            <person name="Pinner E."/>
            <person name="Karpel R."/>
            <person name="Padan E."/>
            <person name="Schuldiner S."/>
            <person name="Krulwich T.A."/>
        </authorList>
    </citation>
    <scope>NUCLEOTIDE SEQUENCE [GENOMIC DNA] OF 1-37</scope>
    <source>
        <strain>NM8191</strain>
    </source>
</reference>
<reference key="5">
    <citation type="journal article" date="1989" name="Nucleic Acids Res.">
        <title>The narX and narL genes encoding the nitrate-sensing regulators of Escherichia coli are homologous to a family of prokaryotic two-component regulatory genes.</title>
        <authorList>
            <person name="Nohno T."/>
            <person name="Noji S."/>
            <person name="Taniguchi S."/>
            <person name="Saito T."/>
        </authorList>
    </citation>
    <scope>NUCLEOTIDE SEQUENCE [GENOMIC DNA] OF 306-417</scope>
    <source>
        <strain>K12</strain>
    </source>
</reference>
<reference key="6">
    <citation type="journal article" date="1989" name="J. Bacteriol.">
        <title>Structure of genes narL and narX of the nar (nitrate reductase) locus in Escherichia coli K-12.</title>
        <authorList>
            <person name="Stewart V."/>
            <person name="Parales J. Jr."/>
            <person name="Merkel S.M."/>
        </authorList>
    </citation>
    <scope>NUCLEOTIDE SEQUENCE [GENOMIC DNA] OF 364-417</scope>
    <source>
        <strain>K12</strain>
    </source>
</reference>
<reference key="7">
    <citation type="journal article" date="1995" name="Nucleic Acids Res.">
        <title>Detection of new genes in a bacterial genome using Markov models for three gene classes.</title>
        <authorList>
            <person name="Borodovsky M."/>
            <person name="McIninch J."/>
            <person name="Koonin E.V."/>
            <person name="Rudd K.E."/>
            <person name="Medigue C."/>
            <person name="Danchin A."/>
        </authorList>
    </citation>
    <scope>IDENTIFICATION</scope>
</reference>
<evidence type="ECO:0000255" key="1"/>
<evidence type="ECO:0000305" key="2"/>
<name>YCHO_ECOLI</name>